<proteinExistence type="inferred from homology"/>
<name>TOLB_CHLL3</name>
<organism>
    <name type="scientific">Chlorobium luteolum (strain DSM 273 / BCRC 81028 / 2530)</name>
    <name type="common">Pelodictyon luteolum</name>
    <dbReference type="NCBI Taxonomy" id="319225"/>
    <lineage>
        <taxon>Bacteria</taxon>
        <taxon>Pseudomonadati</taxon>
        <taxon>Chlorobiota</taxon>
        <taxon>Chlorobiia</taxon>
        <taxon>Chlorobiales</taxon>
        <taxon>Chlorobiaceae</taxon>
        <taxon>Chlorobium/Pelodictyon group</taxon>
        <taxon>Pelodictyon</taxon>
    </lineage>
</organism>
<reference key="1">
    <citation type="submission" date="2005-08" db="EMBL/GenBank/DDBJ databases">
        <title>Complete sequence of Pelodictyon luteolum DSM 273.</title>
        <authorList>
            <consortium name="US DOE Joint Genome Institute"/>
            <person name="Copeland A."/>
            <person name="Lucas S."/>
            <person name="Lapidus A."/>
            <person name="Barry K."/>
            <person name="Detter J.C."/>
            <person name="Glavina T."/>
            <person name="Hammon N."/>
            <person name="Israni S."/>
            <person name="Pitluck S."/>
            <person name="Bryant D."/>
            <person name="Schmutz J."/>
            <person name="Larimer F."/>
            <person name="Land M."/>
            <person name="Kyrpides N."/>
            <person name="Ivanova N."/>
            <person name="Richardson P."/>
        </authorList>
    </citation>
    <scope>NUCLEOTIDE SEQUENCE [LARGE SCALE GENOMIC DNA]</scope>
    <source>
        <strain>DSM 273 / BCRC 81028 / 2530</strain>
    </source>
</reference>
<protein>
    <recommendedName>
        <fullName evidence="3">Protein TolB homolog</fullName>
    </recommendedName>
</protein>
<feature type="signal peptide" evidence="2">
    <location>
        <begin position="1"/>
        <end position="27"/>
    </location>
</feature>
<feature type="chain" id="PRO_0000259067" description="Protein TolB homolog" evidence="2">
    <location>
        <begin position="28"/>
        <end position="436"/>
    </location>
</feature>
<gene>
    <name type="ordered locus">Plut_0614</name>
</gene>
<keyword id="KW-0574">Periplasm</keyword>
<keyword id="KW-1185">Reference proteome</keyword>
<keyword id="KW-0732">Signal</keyword>
<sequence>MRHSIRLTAALLLAFIACFSFPLSAMALEGEYIAIRKEGAGRIALVLGKPLAEGGKASAWSAELDREIREGLAFTGIFNMIPPPLNLFETGGSGKRTLNFGALNSIGAEIFAGGSLASEAGRVKLSMAVYETFGAKPILSKTYSGRPDELRTIAHAFCADLVKLLTGRRSVFGSNIVFVSNRSGFKEIYSCAFDGGSLSQLTRSRSISLTPALSPDGTRLAFTDYTSGRPGLKIMNMADRRISAVRQSGVSIDPGWRSNGEVATTLSFEGDQDIYLVRPDGTLSRKVTSSRGIDLSPSFSPDGTKMAFVSARFGNPQVFILDLGTGQTRRLTYNGNYNTQPSWSPGGDKIAYTTMEKNGEINIFTIRPDGSGATRLTSGARENESPSWSPGGDMIVFTSGRQGQKKLYVMNANGDNQRRLLQMEGEQMQPSWSFIP</sequence>
<dbReference type="EMBL" id="CP000096">
    <property type="protein sequence ID" value="ABB23497.1"/>
    <property type="status" value="ALT_INIT"/>
    <property type="molecule type" value="Genomic_DNA"/>
</dbReference>
<dbReference type="RefSeq" id="WP_041463763.1">
    <property type="nucleotide sequence ID" value="NC_007512.1"/>
</dbReference>
<dbReference type="SMR" id="Q3B584"/>
<dbReference type="STRING" id="319225.Plut_0614"/>
<dbReference type="KEGG" id="plt:Plut_0614"/>
<dbReference type="eggNOG" id="COG0823">
    <property type="taxonomic scope" value="Bacteria"/>
</dbReference>
<dbReference type="HOGENOM" id="CLU_047123_2_0_10"/>
<dbReference type="OrthoDB" id="9815657at2"/>
<dbReference type="Proteomes" id="UP000002709">
    <property type="component" value="Chromosome"/>
</dbReference>
<dbReference type="GO" id="GO:0042597">
    <property type="term" value="C:periplasmic space"/>
    <property type="evidence" value="ECO:0007669"/>
    <property type="project" value="UniProtKB-SubCell"/>
</dbReference>
<dbReference type="Gene3D" id="2.120.10.30">
    <property type="entry name" value="TolB, C-terminal domain"/>
    <property type="match status" value="2"/>
</dbReference>
<dbReference type="Gene3D" id="3.40.50.10070">
    <property type="entry name" value="TolB, N-terminal domain"/>
    <property type="match status" value="1"/>
</dbReference>
<dbReference type="InterPro" id="IPR011042">
    <property type="entry name" value="6-blade_b-propeller_TolB-like"/>
</dbReference>
<dbReference type="InterPro" id="IPR011659">
    <property type="entry name" value="PD40"/>
</dbReference>
<dbReference type="PANTHER" id="PTHR36842:SF1">
    <property type="entry name" value="PROTEIN TOLB"/>
    <property type="match status" value="1"/>
</dbReference>
<dbReference type="PANTHER" id="PTHR36842">
    <property type="entry name" value="PROTEIN TOLB HOMOLOG"/>
    <property type="match status" value="1"/>
</dbReference>
<dbReference type="Pfam" id="PF07676">
    <property type="entry name" value="PD40"/>
    <property type="match status" value="4"/>
</dbReference>
<dbReference type="SUPFAM" id="SSF52964">
    <property type="entry name" value="TolB, N-terminal domain"/>
    <property type="match status" value="1"/>
</dbReference>
<dbReference type="SUPFAM" id="SSF69304">
    <property type="entry name" value="Tricorn protease N-terminal domain"/>
    <property type="match status" value="1"/>
</dbReference>
<comment type="subcellular location">
    <subcellularLocation>
        <location evidence="1">Periplasm</location>
    </subcellularLocation>
</comment>
<comment type="similarity">
    <text evidence="3">Belongs to the TolB family.</text>
</comment>
<comment type="sequence caution" evidence="3">
    <conflict type="erroneous initiation">
        <sequence resource="EMBL-CDS" id="ABB23497"/>
    </conflict>
</comment>
<evidence type="ECO:0000250" key="1">
    <source>
        <dbReference type="UniProtKB" id="P0A855"/>
    </source>
</evidence>
<evidence type="ECO:0000255" key="2"/>
<evidence type="ECO:0000305" key="3"/>
<accession>Q3B584</accession>